<comment type="function">
    <text evidence="1">Catalyzes the S-adenosylmethionine monomethyl esterification of trans-aconitate.</text>
</comment>
<comment type="catalytic activity">
    <reaction evidence="1">
        <text>trans-aconitate + S-adenosyl-L-methionine = (E)-3-(methoxycarbonyl)pent-2-enedioate + S-adenosyl-L-homocysteine</text>
        <dbReference type="Rhea" id="RHEA:14969"/>
        <dbReference type="ChEBI" id="CHEBI:15708"/>
        <dbReference type="ChEBI" id="CHEBI:57470"/>
        <dbReference type="ChEBI" id="CHEBI:57856"/>
        <dbReference type="ChEBI" id="CHEBI:59789"/>
        <dbReference type="EC" id="2.1.1.144"/>
    </reaction>
</comment>
<comment type="subcellular location">
    <subcellularLocation>
        <location evidence="1">Cytoplasm</location>
    </subcellularLocation>
</comment>
<comment type="similarity">
    <text evidence="1">Belongs to the methyltransferase superfamily. Tam family.</text>
</comment>
<dbReference type="EC" id="2.1.1.144" evidence="1"/>
<dbReference type="EMBL" id="AE000513">
    <property type="protein sequence ID" value="AAF10001.1"/>
    <property type="molecule type" value="Genomic_DNA"/>
</dbReference>
<dbReference type="PIR" id="D75520">
    <property type="entry name" value="D75520"/>
</dbReference>
<dbReference type="RefSeq" id="NP_294145.1">
    <property type="nucleotide sequence ID" value="NC_001263.1"/>
</dbReference>
<dbReference type="RefSeq" id="WP_010887067.1">
    <property type="nucleotide sequence ID" value="NC_001263.1"/>
</dbReference>
<dbReference type="SMR" id="Q9RX93"/>
<dbReference type="STRING" id="243230.DR_0422"/>
<dbReference type="PaxDb" id="243230-DR_0422"/>
<dbReference type="EnsemblBacteria" id="AAF10001">
    <property type="protein sequence ID" value="AAF10001"/>
    <property type="gene ID" value="DR_0422"/>
</dbReference>
<dbReference type="GeneID" id="69516653"/>
<dbReference type="KEGG" id="dra:DR_0422"/>
<dbReference type="PATRIC" id="fig|243230.17.peg.595"/>
<dbReference type="eggNOG" id="COG4106">
    <property type="taxonomic scope" value="Bacteria"/>
</dbReference>
<dbReference type="HOGENOM" id="CLU_037990_5_2_0"/>
<dbReference type="InParanoid" id="Q9RX93"/>
<dbReference type="OrthoDB" id="9760689at2"/>
<dbReference type="Proteomes" id="UP000002524">
    <property type="component" value="Chromosome 1"/>
</dbReference>
<dbReference type="GO" id="GO:0005737">
    <property type="term" value="C:cytoplasm"/>
    <property type="evidence" value="ECO:0007669"/>
    <property type="project" value="UniProtKB-SubCell"/>
</dbReference>
<dbReference type="GO" id="GO:0030798">
    <property type="term" value="F:trans-aconitate 2-methyltransferase activity"/>
    <property type="evidence" value="ECO:0007669"/>
    <property type="project" value="UniProtKB-UniRule"/>
</dbReference>
<dbReference type="GO" id="GO:0032259">
    <property type="term" value="P:methylation"/>
    <property type="evidence" value="ECO:0007669"/>
    <property type="project" value="UniProtKB-KW"/>
</dbReference>
<dbReference type="CDD" id="cd02440">
    <property type="entry name" value="AdoMet_MTases"/>
    <property type="match status" value="1"/>
</dbReference>
<dbReference type="Gene3D" id="1.10.150.290">
    <property type="entry name" value="S-adenosyl-L-methionine-dependent methyltransferases"/>
    <property type="match status" value="1"/>
</dbReference>
<dbReference type="Gene3D" id="3.40.50.150">
    <property type="entry name" value="Vaccinia Virus protein VP39"/>
    <property type="match status" value="1"/>
</dbReference>
<dbReference type="HAMAP" id="MF_00560">
    <property type="entry name" value="Tran_acon_Me_trans"/>
    <property type="match status" value="1"/>
</dbReference>
<dbReference type="InterPro" id="IPR041698">
    <property type="entry name" value="Methyltransf_25"/>
</dbReference>
<dbReference type="InterPro" id="IPR029063">
    <property type="entry name" value="SAM-dependent_MTases_sf"/>
</dbReference>
<dbReference type="InterPro" id="IPR023506">
    <property type="entry name" value="Trans-aconitate_MeTrfase"/>
</dbReference>
<dbReference type="InterPro" id="IPR023149">
    <property type="entry name" value="Trans_acon_MeTrfase_C"/>
</dbReference>
<dbReference type="PANTHER" id="PTHR43861:SF1">
    <property type="entry name" value="TRANS-ACONITATE 2-METHYLTRANSFERASE"/>
    <property type="match status" value="1"/>
</dbReference>
<dbReference type="PANTHER" id="PTHR43861">
    <property type="entry name" value="TRANS-ACONITATE 2-METHYLTRANSFERASE-RELATED"/>
    <property type="match status" value="1"/>
</dbReference>
<dbReference type="Pfam" id="PF13649">
    <property type="entry name" value="Methyltransf_25"/>
    <property type="match status" value="1"/>
</dbReference>
<dbReference type="SUPFAM" id="SSF53335">
    <property type="entry name" value="S-adenosyl-L-methionine-dependent methyltransferases"/>
    <property type="match status" value="1"/>
</dbReference>
<evidence type="ECO:0000255" key="1">
    <source>
        <dbReference type="HAMAP-Rule" id="MF_00560"/>
    </source>
</evidence>
<gene>
    <name evidence="1" type="primary">tam</name>
    <name type="ordered locus">DR_0422</name>
</gene>
<feature type="chain" id="PRO_0000218079" description="Trans-aconitate 2-methyltransferase">
    <location>
        <begin position="1"/>
        <end position="258"/>
    </location>
</feature>
<organism>
    <name type="scientific">Deinococcus radiodurans (strain ATCC 13939 / DSM 20539 / JCM 16871 / CCUG 27074 / LMG 4051 / NBRC 15346 / NCIMB 9279 / VKM B-1422 / R1)</name>
    <dbReference type="NCBI Taxonomy" id="243230"/>
    <lineage>
        <taxon>Bacteria</taxon>
        <taxon>Thermotogati</taxon>
        <taxon>Deinococcota</taxon>
        <taxon>Deinococci</taxon>
        <taxon>Deinococcales</taxon>
        <taxon>Deinococcaceae</taxon>
        <taxon>Deinococcus</taxon>
    </lineage>
</organism>
<sequence length="258" mass="28135">MTWNPDQYHQFKDARSAPARDLQALIPERPYAQVVDLGCGTGEQTAQLAQRFPQATVLGLDSSAAMLAKAGAQQLPNLRFEQGDIQELSGSFDLLYSNAALQWLPDHPRLLARLWEHLRPGGVLAVQVPANHDHASHRLLTATANEFETELGGFTRFGTAHGASPVLTPAAYAELLDGLGAVDITALSKVYPVVLPGAEGLIEWTKGTALVPYLSRLDGADAARFLDVYRGKLQAEFPGERVYYAFTRVLFVATRPEL</sequence>
<protein>
    <recommendedName>
        <fullName evidence="1">Trans-aconitate 2-methyltransferase</fullName>
        <ecNumber evidence="1">2.1.1.144</ecNumber>
    </recommendedName>
</protein>
<proteinExistence type="inferred from homology"/>
<name>TAM_DEIRA</name>
<reference key="1">
    <citation type="journal article" date="1999" name="Science">
        <title>Genome sequence of the radioresistant bacterium Deinococcus radiodurans R1.</title>
        <authorList>
            <person name="White O."/>
            <person name="Eisen J.A."/>
            <person name="Heidelberg J.F."/>
            <person name="Hickey E.K."/>
            <person name="Peterson J.D."/>
            <person name="Dodson R.J."/>
            <person name="Haft D.H."/>
            <person name="Gwinn M.L."/>
            <person name="Nelson W.C."/>
            <person name="Richardson D.L."/>
            <person name="Moffat K.S."/>
            <person name="Qin H."/>
            <person name="Jiang L."/>
            <person name="Pamphile W."/>
            <person name="Crosby M."/>
            <person name="Shen M."/>
            <person name="Vamathevan J.J."/>
            <person name="Lam P."/>
            <person name="McDonald L.A."/>
            <person name="Utterback T.R."/>
            <person name="Zalewski C."/>
            <person name="Makarova K.S."/>
            <person name="Aravind L."/>
            <person name="Daly M.J."/>
            <person name="Minton K.W."/>
            <person name="Fleischmann R.D."/>
            <person name="Ketchum K.A."/>
            <person name="Nelson K.E."/>
            <person name="Salzberg S.L."/>
            <person name="Smith H.O."/>
            <person name="Venter J.C."/>
            <person name="Fraser C.M."/>
        </authorList>
    </citation>
    <scope>NUCLEOTIDE SEQUENCE [LARGE SCALE GENOMIC DNA]</scope>
    <source>
        <strain>ATCC 13939 / DSM 20539 / JCM 16871 / CCUG 27074 / LMG 4051 / NBRC 15346 / NCIMB 9279 / VKM B-1422 / R1</strain>
    </source>
</reference>
<accession>Q9RX93</accession>
<keyword id="KW-0963">Cytoplasm</keyword>
<keyword id="KW-0489">Methyltransferase</keyword>
<keyword id="KW-1185">Reference proteome</keyword>
<keyword id="KW-0949">S-adenosyl-L-methionine</keyword>
<keyword id="KW-0808">Transferase</keyword>